<gene>
    <name type="primary">CLEC4F</name>
    <name type="synonym">CLECSF13</name>
</gene>
<feature type="chain" id="PRO_0000046622" description="C-type lectin domain family 4 member F">
    <location>
        <begin position="1"/>
        <end position="589"/>
    </location>
</feature>
<feature type="topological domain" description="Cytoplasmic" evidence="2">
    <location>
        <begin position="1"/>
        <end position="39"/>
    </location>
</feature>
<feature type="transmembrane region" description="Helical; Signal-anchor for type II membrane protein" evidence="2">
    <location>
        <begin position="40"/>
        <end position="60"/>
    </location>
</feature>
<feature type="topological domain" description="Extracellular" evidence="2">
    <location>
        <begin position="61"/>
        <end position="589"/>
    </location>
</feature>
<feature type="domain" description="C-type lectin" evidence="3">
    <location>
        <begin position="476"/>
        <end position="589"/>
    </location>
</feature>
<feature type="glycosylation site" description="N-linked (GlcNAc...) asparagine" evidence="2">
    <location>
        <position position="79"/>
    </location>
</feature>
<feature type="glycosylation site" description="N-linked (GlcNAc...) asparagine" evidence="2">
    <location>
        <position position="113"/>
    </location>
</feature>
<feature type="glycosylation site" description="N-linked (GlcNAc...) asparagine" evidence="2">
    <location>
        <position position="207"/>
    </location>
</feature>
<feature type="glycosylation site" description="N-linked (GlcNAc...) asparagine" evidence="2">
    <location>
        <position position="230"/>
    </location>
</feature>
<feature type="glycosylation site" description="N-linked (GlcNAc...) asparagine" evidence="2">
    <location>
        <position position="244"/>
    </location>
</feature>
<feature type="glycosylation site" description="N-linked (GlcNAc...) asparagine" evidence="2">
    <location>
        <position position="312"/>
    </location>
</feature>
<feature type="glycosylation site" description="N-linked (GlcNAc...) asparagine" evidence="2">
    <location>
        <position position="385"/>
    </location>
</feature>
<feature type="glycosylation site" description="N-linked (GlcNAc...) asparagine" evidence="2">
    <location>
        <position position="399"/>
    </location>
</feature>
<feature type="splice variant" id="VSP_056330" description="In isoform 2." evidence="5">
    <original>PGSKGSCPLRKYIIVNSGMGACSFIDTPPCPWILSN</original>
    <variation>SHSTRKGCCLHLTV</variation>
    <location>
        <begin position="554"/>
        <end position="589"/>
    </location>
</feature>
<feature type="sequence variant" id="VAR_054429" description="In dbSNP:rs2075221.">
    <original>R</original>
    <variation>Q</variation>
    <location>
        <position position="101"/>
    </location>
</feature>
<feature type="sequence variant" id="VAR_054430" description="In dbSNP:rs722896.">
    <original>R</original>
    <variation>H</variation>
    <location>
        <position position="351"/>
    </location>
</feature>
<feature type="sequence variant" id="VAR_054431" description="In dbSNP:rs2287101." evidence="4">
    <original>K</original>
    <variation>R</variation>
    <location>
        <position position="564"/>
    </location>
</feature>
<feature type="sequence conflict" description="In Ref. 1; BAC04786." evidence="6" ref="1">
    <original>L</original>
    <variation>P</variation>
    <location>
        <position position="17"/>
    </location>
</feature>
<name>CLC4F_HUMAN</name>
<organism>
    <name type="scientific">Homo sapiens</name>
    <name type="common">Human</name>
    <dbReference type="NCBI Taxonomy" id="9606"/>
    <lineage>
        <taxon>Eukaryota</taxon>
        <taxon>Metazoa</taxon>
        <taxon>Chordata</taxon>
        <taxon>Craniata</taxon>
        <taxon>Vertebrata</taxon>
        <taxon>Euteleostomi</taxon>
        <taxon>Mammalia</taxon>
        <taxon>Eutheria</taxon>
        <taxon>Euarchontoglires</taxon>
        <taxon>Primates</taxon>
        <taxon>Haplorrhini</taxon>
        <taxon>Catarrhini</taxon>
        <taxon>Hominidae</taxon>
        <taxon>Homo</taxon>
    </lineage>
</organism>
<sequence length="589" mass="65519">MDGEAVRFCTDNQCVSLHPQEVDSVAMAPAAPKIPRLVQATPAFMAVTLVFSLVTLFVVVQQQTRPVPKPVQAVILGDNITGHLPFEPNNHHHFGREAEMRELIQTFKGHMENSSAWVVEIQMLKCRVDNVNSQLQVLGDHLGNTNADIQMVKGVLKDATTLSLQTQMLRSSLEGTNAEIQRLKEDLEKADALTFQTLNFLKSSLENTSIELHVLSRGLENANSEIQMLNASLETANTQAQLANSSLKNANAEIYVLRGHLDSVNDLRTQNQVLRNSLEGANAEIQGLKENLQNTNALNSQTQAFIKSSFDNTSAEIQFLRGHLERAGDEIHVLKRDLKMVTAQTQKANGRLDQTDTQIQVFKSEMENVNTLNAQIQVLNGHMKNASREIQTLKQGMKNASALTSQTQMLDSNLQKASAEIQRLRGDLENTKALTMEIQQEQSRLKTLHVVITSQEQLQRTQSQLLQMVLQGWKFNGGSLYYFSSVKKSWHEAEQFCVSQGAHLASVASKEEQAFLVEFTSKVYYWIGLTDRGTEGSWRWTDGTPFNAAQNKAPGSKGSCPLRKYIIVNSGMGACSFIDTPPCPWILSN</sequence>
<proteinExistence type="evidence at transcript level"/>
<accession>Q8N1N0</accession>
<accession>A4QPA5</accession>
<dbReference type="EMBL" id="AK096429">
    <property type="protein sequence ID" value="BAC04786.1"/>
    <property type="status" value="ALT_SEQ"/>
    <property type="molecule type" value="mRNA"/>
</dbReference>
<dbReference type="EMBL" id="AC007395">
    <property type="status" value="NOT_ANNOTATED_CDS"/>
    <property type="molecule type" value="Genomic_DNA"/>
</dbReference>
<dbReference type="EMBL" id="BC139723">
    <property type="protein sequence ID" value="AAI39724.1"/>
    <property type="molecule type" value="mRNA"/>
</dbReference>
<dbReference type="CCDS" id="CCDS1910.1">
    <molecule id="Q8N1N0-1"/>
</dbReference>
<dbReference type="CCDS" id="CCDS82464.1">
    <molecule id="Q8N1N0-2"/>
</dbReference>
<dbReference type="RefSeq" id="NP_001308237.1">
    <molecule id="Q8N1N0-2"/>
    <property type="nucleotide sequence ID" value="NM_001321308.2"/>
</dbReference>
<dbReference type="RefSeq" id="NP_775806.2">
    <molecule id="Q8N1N0-1"/>
    <property type="nucleotide sequence ID" value="NM_173535.2"/>
</dbReference>
<dbReference type="SMR" id="Q8N1N0"/>
<dbReference type="BioGRID" id="127914">
    <property type="interactions" value="12"/>
</dbReference>
<dbReference type="FunCoup" id="Q8N1N0">
    <property type="interactions" value="30"/>
</dbReference>
<dbReference type="IntAct" id="Q8N1N0">
    <property type="interactions" value="9"/>
</dbReference>
<dbReference type="STRING" id="9606.ENSP00000272367"/>
<dbReference type="GlyCosmos" id="Q8N1N0">
    <property type="glycosylation" value="8 sites, No reported glycans"/>
</dbReference>
<dbReference type="GlyGen" id="Q8N1N0">
    <property type="glycosylation" value="8 sites"/>
</dbReference>
<dbReference type="iPTMnet" id="Q8N1N0"/>
<dbReference type="PhosphoSitePlus" id="Q8N1N0"/>
<dbReference type="BioMuta" id="CLEC4F"/>
<dbReference type="DMDM" id="223590178"/>
<dbReference type="jPOST" id="Q8N1N0"/>
<dbReference type="MassIVE" id="Q8N1N0"/>
<dbReference type="PaxDb" id="9606-ENSP00000272367"/>
<dbReference type="PeptideAtlas" id="Q8N1N0"/>
<dbReference type="Antibodypedia" id="31156">
    <property type="antibodies" value="86 antibodies from 21 providers"/>
</dbReference>
<dbReference type="DNASU" id="165530"/>
<dbReference type="Ensembl" id="ENST00000272367.7">
    <molecule id="Q8N1N0-1"/>
    <property type="protein sequence ID" value="ENSP00000272367.2"/>
    <property type="gene ID" value="ENSG00000152672.8"/>
</dbReference>
<dbReference type="Ensembl" id="ENST00000426626.1">
    <molecule id="Q8N1N0-2"/>
    <property type="protein sequence ID" value="ENSP00000390581.1"/>
    <property type="gene ID" value="ENSG00000152672.8"/>
</dbReference>
<dbReference type="GeneID" id="165530"/>
<dbReference type="KEGG" id="hsa:165530"/>
<dbReference type="MANE-Select" id="ENST00000272367.7">
    <property type="protein sequence ID" value="ENSP00000272367.2"/>
    <property type="RefSeq nucleotide sequence ID" value="NM_173535.3"/>
    <property type="RefSeq protein sequence ID" value="NP_775806.2"/>
</dbReference>
<dbReference type="UCSC" id="uc002shf.4">
    <molecule id="Q8N1N0-1"/>
    <property type="organism name" value="human"/>
</dbReference>
<dbReference type="AGR" id="HGNC:25357"/>
<dbReference type="CTD" id="165530"/>
<dbReference type="DisGeNET" id="165530"/>
<dbReference type="GeneCards" id="CLEC4F"/>
<dbReference type="HGNC" id="HGNC:25357">
    <property type="gene designation" value="CLEC4F"/>
</dbReference>
<dbReference type="HPA" id="ENSG00000152672">
    <property type="expression patterns" value="Tissue enhanced (retina)"/>
</dbReference>
<dbReference type="MIM" id="620105">
    <property type="type" value="gene"/>
</dbReference>
<dbReference type="neXtProt" id="NX_Q8N1N0"/>
<dbReference type="OpenTargets" id="ENSG00000152672"/>
<dbReference type="PharmGKB" id="PA134968842"/>
<dbReference type="VEuPathDB" id="HostDB:ENSG00000152672"/>
<dbReference type="eggNOG" id="KOG4297">
    <property type="taxonomic scope" value="Eukaryota"/>
</dbReference>
<dbReference type="GeneTree" id="ENSGT01030000234575"/>
<dbReference type="HOGENOM" id="CLU_030099_1_0_1"/>
<dbReference type="InParanoid" id="Q8N1N0"/>
<dbReference type="OMA" id="LSFQTQM"/>
<dbReference type="OrthoDB" id="2142683at2759"/>
<dbReference type="PAN-GO" id="Q8N1N0">
    <property type="GO annotations" value="3 GO annotations based on evolutionary models"/>
</dbReference>
<dbReference type="PhylomeDB" id="Q8N1N0"/>
<dbReference type="TreeFam" id="TF333341"/>
<dbReference type="PathwayCommons" id="Q8N1N0"/>
<dbReference type="SignaLink" id="Q8N1N0"/>
<dbReference type="BioGRID-ORCS" id="165530">
    <property type="hits" value="17 hits in 1140 CRISPR screens"/>
</dbReference>
<dbReference type="ChiTaRS" id="CLEC4F">
    <property type="organism name" value="human"/>
</dbReference>
<dbReference type="GenomeRNAi" id="165530"/>
<dbReference type="Pharos" id="Q8N1N0">
    <property type="development level" value="Tbio"/>
</dbReference>
<dbReference type="PRO" id="PR:Q8N1N0"/>
<dbReference type="Proteomes" id="UP000005640">
    <property type="component" value="Chromosome 2"/>
</dbReference>
<dbReference type="RNAct" id="Q8N1N0">
    <property type="molecule type" value="protein"/>
</dbReference>
<dbReference type="Bgee" id="ENSG00000152672">
    <property type="expression patterns" value="Expressed in granulocyte and 81 other cell types or tissues"/>
</dbReference>
<dbReference type="GO" id="GO:0009897">
    <property type="term" value="C:external side of plasma membrane"/>
    <property type="evidence" value="ECO:0000318"/>
    <property type="project" value="GO_Central"/>
</dbReference>
<dbReference type="GO" id="GO:0030246">
    <property type="term" value="F:carbohydrate binding"/>
    <property type="evidence" value="ECO:0000318"/>
    <property type="project" value="GO_Central"/>
</dbReference>
<dbReference type="GO" id="GO:0038187">
    <property type="term" value="F:pattern recognition receptor activity"/>
    <property type="evidence" value="ECO:0000318"/>
    <property type="project" value="GO_Central"/>
</dbReference>
<dbReference type="GO" id="GO:0006897">
    <property type="term" value="P:endocytosis"/>
    <property type="evidence" value="ECO:0007669"/>
    <property type="project" value="UniProtKB-KW"/>
</dbReference>
<dbReference type="GO" id="GO:0006955">
    <property type="term" value="P:immune response"/>
    <property type="evidence" value="ECO:0000318"/>
    <property type="project" value="GO_Central"/>
</dbReference>
<dbReference type="CDD" id="cd03590">
    <property type="entry name" value="CLECT_DC-SIGN_like"/>
    <property type="match status" value="1"/>
</dbReference>
<dbReference type="Gene3D" id="1.20.5.170">
    <property type="match status" value="7"/>
</dbReference>
<dbReference type="Gene3D" id="3.10.100.10">
    <property type="entry name" value="Mannose-Binding Protein A, subunit A"/>
    <property type="match status" value="1"/>
</dbReference>
<dbReference type="InterPro" id="IPR001304">
    <property type="entry name" value="C-type_lectin-like"/>
</dbReference>
<dbReference type="InterPro" id="IPR016186">
    <property type="entry name" value="C-type_lectin-like/link_sf"/>
</dbReference>
<dbReference type="InterPro" id="IPR050111">
    <property type="entry name" value="C-type_lectin/snaclec_domain"/>
</dbReference>
<dbReference type="InterPro" id="IPR033989">
    <property type="entry name" value="CD209-like_CTLD"/>
</dbReference>
<dbReference type="InterPro" id="IPR016187">
    <property type="entry name" value="CTDL_fold"/>
</dbReference>
<dbReference type="PANTHER" id="PTHR22803">
    <property type="entry name" value="MANNOSE, PHOSPHOLIPASE, LECTIN RECEPTOR RELATED"/>
    <property type="match status" value="1"/>
</dbReference>
<dbReference type="Pfam" id="PF00059">
    <property type="entry name" value="Lectin_C"/>
    <property type="match status" value="1"/>
</dbReference>
<dbReference type="SMART" id="SM00034">
    <property type="entry name" value="CLECT"/>
    <property type="match status" value="1"/>
</dbReference>
<dbReference type="SUPFAM" id="SSF56436">
    <property type="entry name" value="C-type lectin-like"/>
    <property type="match status" value="1"/>
</dbReference>
<dbReference type="PROSITE" id="PS50041">
    <property type="entry name" value="C_TYPE_LECTIN_2"/>
    <property type="match status" value="1"/>
</dbReference>
<protein>
    <recommendedName>
        <fullName>C-type lectin domain family 4 member F</fullName>
    </recommendedName>
    <alternativeName>
        <fullName>C-type lectin superfamily member 13</fullName>
        <shortName>C-type lectin 13</shortName>
    </alternativeName>
</protein>
<reference key="1">
    <citation type="journal article" date="2004" name="Nat. Genet.">
        <title>Complete sequencing and characterization of 21,243 full-length human cDNAs.</title>
        <authorList>
            <person name="Ota T."/>
            <person name="Suzuki Y."/>
            <person name="Nishikawa T."/>
            <person name="Otsuki T."/>
            <person name="Sugiyama T."/>
            <person name="Irie R."/>
            <person name="Wakamatsu A."/>
            <person name="Hayashi K."/>
            <person name="Sato H."/>
            <person name="Nagai K."/>
            <person name="Kimura K."/>
            <person name="Makita H."/>
            <person name="Sekine M."/>
            <person name="Obayashi M."/>
            <person name="Nishi T."/>
            <person name="Shibahara T."/>
            <person name="Tanaka T."/>
            <person name="Ishii S."/>
            <person name="Yamamoto J."/>
            <person name="Saito K."/>
            <person name="Kawai Y."/>
            <person name="Isono Y."/>
            <person name="Nakamura Y."/>
            <person name="Nagahari K."/>
            <person name="Murakami K."/>
            <person name="Yasuda T."/>
            <person name="Iwayanagi T."/>
            <person name="Wagatsuma M."/>
            <person name="Shiratori A."/>
            <person name="Sudo H."/>
            <person name="Hosoiri T."/>
            <person name="Kaku Y."/>
            <person name="Kodaira H."/>
            <person name="Kondo H."/>
            <person name="Sugawara M."/>
            <person name="Takahashi M."/>
            <person name="Kanda K."/>
            <person name="Yokoi T."/>
            <person name="Furuya T."/>
            <person name="Kikkawa E."/>
            <person name="Omura Y."/>
            <person name="Abe K."/>
            <person name="Kamihara K."/>
            <person name="Katsuta N."/>
            <person name="Sato K."/>
            <person name="Tanikawa M."/>
            <person name="Yamazaki M."/>
            <person name="Ninomiya K."/>
            <person name="Ishibashi T."/>
            <person name="Yamashita H."/>
            <person name="Murakawa K."/>
            <person name="Fujimori K."/>
            <person name="Tanai H."/>
            <person name="Kimata M."/>
            <person name="Watanabe M."/>
            <person name="Hiraoka S."/>
            <person name="Chiba Y."/>
            <person name="Ishida S."/>
            <person name="Ono Y."/>
            <person name="Takiguchi S."/>
            <person name="Watanabe S."/>
            <person name="Yosida M."/>
            <person name="Hotuta T."/>
            <person name="Kusano J."/>
            <person name="Kanehori K."/>
            <person name="Takahashi-Fujii A."/>
            <person name="Hara H."/>
            <person name="Tanase T.-O."/>
            <person name="Nomura Y."/>
            <person name="Togiya S."/>
            <person name="Komai F."/>
            <person name="Hara R."/>
            <person name="Takeuchi K."/>
            <person name="Arita M."/>
            <person name="Imose N."/>
            <person name="Musashino K."/>
            <person name="Yuuki H."/>
            <person name="Oshima A."/>
            <person name="Sasaki N."/>
            <person name="Aotsuka S."/>
            <person name="Yoshikawa Y."/>
            <person name="Matsunawa H."/>
            <person name="Ichihara T."/>
            <person name="Shiohata N."/>
            <person name="Sano S."/>
            <person name="Moriya S."/>
            <person name="Momiyama H."/>
            <person name="Satoh N."/>
            <person name="Takami S."/>
            <person name="Terashima Y."/>
            <person name="Suzuki O."/>
            <person name="Nakagawa S."/>
            <person name="Senoh A."/>
            <person name="Mizoguchi H."/>
            <person name="Goto Y."/>
            <person name="Shimizu F."/>
            <person name="Wakebe H."/>
            <person name="Hishigaki H."/>
            <person name="Watanabe T."/>
            <person name="Sugiyama A."/>
            <person name="Takemoto M."/>
            <person name="Kawakami B."/>
            <person name="Yamazaki M."/>
            <person name="Watanabe K."/>
            <person name="Kumagai A."/>
            <person name="Itakura S."/>
            <person name="Fukuzumi Y."/>
            <person name="Fujimori Y."/>
            <person name="Komiyama M."/>
            <person name="Tashiro H."/>
            <person name="Tanigami A."/>
            <person name="Fujiwara T."/>
            <person name="Ono T."/>
            <person name="Yamada K."/>
            <person name="Fujii Y."/>
            <person name="Ozaki K."/>
            <person name="Hirao M."/>
            <person name="Ohmori Y."/>
            <person name="Kawabata A."/>
            <person name="Hikiji T."/>
            <person name="Kobatake N."/>
            <person name="Inagaki H."/>
            <person name="Ikema Y."/>
            <person name="Okamoto S."/>
            <person name="Okitani R."/>
            <person name="Kawakami T."/>
            <person name="Noguchi S."/>
            <person name="Itoh T."/>
            <person name="Shigeta K."/>
            <person name="Senba T."/>
            <person name="Matsumura K."/>
            <person name="Nakajima Y."/>
            <person name="Mizuno T."/>
            <person name="Morinaga M."/>
            <person name="Sasaki M."/>
            <person name="Togashi T."/>
            <person name="Oyama M."/>
            <person name="Hata H."/>
            <person name="Watanabe M."/>
            <person name="Komatsu T."/>
            <person name="Mizushima-Sugano J."/>
            <person name="Satoh T."/>
            <person name="Shirai Y."/>
            <person name="Takahashi Y."/>
            <person name="Nakagawa K."/>
            <person name="Okumura K."/>
            <person name="Nagase T."/>
            <person name="Nomura N."/>
            <person name="Kikuchi H."/>
            <person name="Masuho Y."/>
            <person name="Yamashita R."/>
            <person name="Nakai K."/>
            <person name="Yada T."/>
            <person name="Nakamura Y."/>
            <person name="Ohara O."/>
            <person name="Isogai T."/>
            <person name="Sugano S."/>
        </authorList>
    </citation>
    <scope>NUCLEOTIDE SEQUENCE [LARGE SCALE MRNA] (ISOFORM 1)</scope>
    <scope>VARIANT ARG-564</scope>
    <source>
        <tissue>Tongue</tissue>
    </source>
</reference>
<reference key="2">
    <citation type="journal article" date="2005" name="Nature">
        <title>Generation and annotation of the DNA sequences of human chromosomes 2 and 4.</title>
        <authorList>
            <person name="Hillier L.W."/>
            <person name="Graves T.A."/>
            <person name="Fulton R.S."/>
            <person name="Fulton L.A."/>
            <person name="Pepin K.H."/>
            <person name="Minx P."/>
            <person name="Wagner-McPherson C."/>
            <person name="Layman D."/>
            <person name="Wylie K."/>
            <person name="Sekhon M."/>
            <person name="Becker M.C."/>
            <person name="Fewell G.A."/>
            <person name="Delehaunty K.D."/>
            <person name="Miner T.L."/>
            <person name="Nash W.E."/>
            <person name="Kremitzki C."/>
            <person name="Oddy L."/>
            <person name="Du H."/>
            <person name="Sun H."/>
            <person name="Bradshaw-Cordum H."/>
            <person name="Ali J."/>
            <person name="Carter J."/>
            <person name="Cordes M."/>
            <person name="Harris A."/>
            <person name="Isak A."/>
            <person name="van Brunt A."/>
            <person name="Nguyen C."/>
            <person name="Du F."/>
            <person name="Courtney L."/>
            <person name="Kalicki J."/>
            <person name="Ozersky P."/>
            <person name="Abbott S."/>
            <person name="Armstrong J."/>
            <person name="Belter E.A."/>
            <person name="Caruso L."/>
            <person name="Cedroni M."/>
            <person name="Cotton M."/>
            <person name="Davidson T."/>
            <person name="Desai A."/>
            <person name="Elliott G."/>
            <person name="Erb T."/>
            <person name="Fronick C."/>
            <person name="Gaige T."/>
            <person name="Haakenson W."/>
            <person name="Haglund K."/>
            <person name="Holmes A."/>
            <person name="Harkins R."/>
            <person name="Kim K."/>
            <person name="Kruchowski S.S."/>
            <person name="Strong C.M."/>
            <person name="Grewal N."/>
            <person name="Goyea E."/>
            <person name="Hou S."/>
            <person name="Levy A."/>
            <person name="Martinka S."/>
            <person name="Mead K."/>
            <person name="McLellan M.D."/>
            <person name="Meyer R."/>
            <person name="Randall-Maher J."/>
            <person name="Tomlinson C."/>
            <person name="Dauphin-Kohlberg S."/>
            <person name="Kozlowicz-Reilly A."/>
            <person name="Shah N."/>
            <person name="Swearengen-Shahid S."/>
            <person name="Snider J."/>
            <person name="Strong J.T."/>
            <person name="Thompson J."/>
            <person name="Yoakum M."/>
            <person name="Leonard S."/>
            <person name="Pearman C."/>
            <person name="Trani L."/>
            <person name="Radionenko M."/>
            <person name="Waligorski J.E."/>
            <person name="Wang C."/>
            <person name="Rock S.M."/>
            <person name="Tin-Wollam A.-M."/>
            <person name="Maupin R."/>
            <person name="Latreille P."/>
            <person name="Wendl M.C."/>
            <person name="Yang S.-P."/>
            <person name="Pohl C."/>
            <person name="Wallis J.W."/>
            <person name="Spieth J."/>
            <person name="Bieri T.A."/>
            <person name="Berkowicz N."/>
            <person name="Nelson J.O."/>
            <person name="Osborne J."/>
            <person name="Ding L."/>
            <person name="Meyer R."/>
            <person name="Sabo A."/>
            <person name="Shotland Y."/>
            <person name="Sinha P."/>
            <person name="Wohldmann P.E."/>
            <person name="Cook L.L."/>
            <person name="Hickenbotham M.T."/>
            <person name="Eldred J."/>
            <person name="Williams D."/>
            <person name="Jones T.A."/>
            <person name="She X."/>
            <person name="Ciccarelli F.D."/>
            <person name="Izaurralde E."/>
            <person name="Taylor J."/>
            <person name="Schmutz J."/>
            <person name="Myers R.M."/>
            <person name="Cox D.R."/>
            <person name="Huang X."/>
            <person name="McPherson J.D."/>
            <person name="Mardis E.R."/>
            <person name="Clifton S.W."/>
            <person name="Warren W.C."/>
            <person name="Chinwalla A.T."/>
            <person name="Eddy S.R."/>
            <person name="Marra M.A."/>
            <person name="Ovcharenko I."/>
            <person name="Furey T.S."/>
            <person name="Miller W."/>
            <person name="Eichler E.E."/>
            <person name="Bork P."/>
            <person name="Suyama M."/>
            <person name="Torrents D."/>
            <person name="Waterston R.H."/>
            <person name="Wilson R.K."/>
        </authorList>
    </citation>
    <scope>NUCLEOTIDE SEQUENCE [LARGE SCALE GENOMIC DNA]</scope>
</reference>
<reference key="3">
    <citation type="journal article" date="2004" name="Genome Res.">
        <title>The status, quality, and expansion of the NIH full-length cDNA project: the Mammalian Gene Collection (MGC).</title>
        <authorList>
            <consortium name="The MGC Project Team"/>
        </authorList>
    </citation>
    <scope>NUCLEOTIDE SEQUENCE [LARGE SCALE MRNA] (ISOFORM 2)</scope>
</reference>
<comment type="function">
    <text evidence="1">Receptor with an affinity for galactose and fucose. Could be involved in endocytosis (By similarity).</text>
</comment>
<comment type="subcellular location">
    <subcellularLocation>
        <location evidence="1">Membrane</location>
        <topology evidence="1">Single-pass type II membrane protein</topology>
    </subcellularLocation>
</comment>
<comment type="alternative products">
    <event type="alternative splicing"/>
    <isoform>
        <id>Q8N1N0-1</id>
        <name>1</name>
        <sequence type="displayed"/>
    </isoform>
    <isoform>
        <id>Q8N1N0-2</id>
        <name>2</name>
        <sequence type="described" ref="VSP_056330"/>
    </isoform>
</comment>
<comment type="sequence caution" evidence="6">
    <conflict type="erroneous termination">
        <sequence resource="EMBL-CDS" id="BAC04786"/>
    </conflict>
    <text>Truncated C-terminus.</text>
</comment>
<comment type="online information" name="Functional Glycomics Gateway - Glycan Binding">
    <link uri="http://www.functionalglycomics.org/glycomics/GBPServlet?&amp;operationType=view&amp;cbpId=cbp_hum_Ctlect_00114"/>
    <text>Kupffer cell receptor</text>
</comment>
<evidence type="ECO:0000250" key="1"/>
<evidence type="ECO:0000255" key="2"/>
<evidence type="ECO:0000255" key="3">
    <source>
        <dbReference type="PROSITE-ProRule" id="PRU00040"/>
    </source>
</evidence>
<evidence type="ECO:0000269" key="4">
    <source>
    </source>
</evidence>
<evidence type="ECO:0000303" key="5">
    <source>
    </source>
</evidence>
<evidence type="ECO:0000305" key="6"/>
<keyword id="KW-0025">Alternative splicing</keyword>
<keyword id="KW-0254">Endocytosis</keyword>
<keyword id="KW-0325">Glycoprotein</keyword>
<keyword id="KW-0430">Lectin</keyword>
<keyword id="KW-0472">Membrane</keyword>
<keyword id="KW-0675">Receptor</keyword>
<keyword id="KW-1185">Reference proteome</keyword>
<keyword id="KW-0735">Signal-anchor</keyword>
<keyword id="KW-0812">Transmembrane</keyword>
<keyword id="KW-1133">Transmembrane helix</keyword>